<gene>
    <name evidence="1" type="primary">ubiG</name>
    <name type="ordered locus">ECS88_2380</name>
</gene>
<feature type="chain" id="PRO_1000199683" description="Ubiquinone biosynthesis O-methyltransferase">
    <location>
        <begin position="1"/>
        <end position="240"/>
    </location>
</feature>
<feature type="binding site" evidence="1">
    <location>
        <position position="44"/>
    </location>
    <ligand>
        <name>S-adenosyl-L-methionine</name>
        <dbReference type="ChEBI" id="CHEBI:59789"/>
    </ligand>
</feature>
<feature type="binding site" evidence="1">
    <location>
        <position position="64"/>
    </location>
    <ligand>
        <name>S-adenosyl-L-methionine</name>
        <dbReference type="ChEBI" id="CHEBI:59789"/>
    </ligand>
</feature>
<feature type="binding site" evidence="1">
    <location>
        <position position="85"/>
    </location>
    <ligand>
        <name>S-adenosyl-L-methionine</name>
        <dbReference type="ChEBI" id="CHEBI:59789"/>
    </ligand>
</feature>
<feature type="binding site" evidence="1">
    <location>
        <position position="129"/>
    </location>
    <ligand>
        <name>S-adenosyl-L-methionine</name>
        <dbReference type="ChEBI" id="CHEBI:59789"/>
    </ligand>
</feature>
<dbReference type="EC" id="2.1.1.222" evidence="1"/>
<dbReference type="EC" id="2.1.1.64" evidence="1"/>
<dbReference type="EMBL" id="CU928161">
    <property type="protein sequence ID" value="CAR03660.1"/>
    <property type="molecule type" value="Genomic_DNA"/>
</dbReference>
<dbReference type="RefSeq" id="WP_000990768.1">
    <property type="nucleotide sequence ID" value="NC_011742.1"/>
</dbReference>
<dbReference type="SMR" id="B7MFZ8"/>
<dbReference type="KEGG" id="ecz:ECS88_2380"/>
<dbReference type="HOGENOM" id="CLU_042432_5_0_6"/>
<dbReference type="UniPathway" id="UPA00232"/>
<dbReference type="Proteomes" id="UP000000747">
    <property type="component" value="Chromosome"/>
</dbReference>
<dbReference type="GO" id="GO:0102208">
    <property type="term" value="F:2-polyprenyl-6-hydroxyphenol methylase activity"/>
    <property type="evidence" value="ECO:0007669"/>
    <property type="project" value="UniProtKB-EC"/>
</dbReference>
<dbReference type="GO" id="GO:0061542">
    <property type="term" value="F:3-demethylubiquinol 3-O-methyltransferase activity"/>
    <property type="evidence" value="ECO:0007669"/>
    <property type="project" value="UniProtKB-UniRule"/>
</dbReference>
<dbReference type="GO" id="GO:0010420">
    <property type="term" value="F:polyprenyldihydroxybenzoate methyltransferase activity"/>
    <property type="evidence" value="ECO:0007669"/>
    <property type="project" value="InterPro"/>
</dbReference>
<dbReference type="GO" id="GO:0032259">
    <property type="term" value="P:methylation"/>
    <property type="evidence" value="ECO:0007669"/>
    <property type="project" value="UniProtKB-KW"/>
</dbReference>
<dbReference type="CDD" id="cd02440">
    <property type="entry name" value="AdoMet_MTases"/>
    <property type="match status" value="1"/>
</dbReference>
<dbReference type="FunFam" id="3.40.50.150:FF:000028">
    <property type="entry name" value="Ubiquinone biosynthesis O-methyltransferase"/>
    <property type="match status" value="1"/>
</dbReference>
<dbReference type="Gene3D" id="3.40.50.150">
    <property type="entry name" value="Vaccinia Virus protein VP39"/>
    <property type="match status" value="1"/>
</dbReference>
<dbReference type="HAMAP" id="MF_00472">
    <property type="entry name" value="UbiG"/>
    <property type="match status" value="1"/>
</dbReference>
<dbReference type="InterPro" id="IPR029063">
    <property type="entry name" value="SAM-dependent_MTases_sf"/>
</dbReference>
<dbReference type="InterPro" id="IPR010233">
    <property type="entry name" value="UbiG_MeTrfase"/>
</dbReference>
<dbReference type="NCBIfam" id="TIGR01983">
    <property type="entry name" value="UbiG"/>
    <property type="match status" value="1"/>
</dbReference>
<dbReference type="PANTHER" id="PTHR43464">
    <property type="entry name" value="METHYLTRANSFERASE"/>
    <property type="match status" value="1"/>
</dbReference>
<dbReference type="PANTHER" id="PTHR43464:SF19">
    <property type="entry name" value="UBIQUINONE BIOSYNTHESIS O-METHYLTRANSFERASE, MITOCHONDRIAL"/>
    <property type="match status" value="1"/>
</dbReference>
<dbReference type="Pfam" id="PF13489">
    <property type="entry name" value="Methyltransf_23"/>
    <property type="match status" value="1"/>
</dbReference>
<dbReference type="SUPFAM" id="SSF53335">
    <property type="entry name" value="S-adenosyl-L-methionine-dependent methyltransferases"/>
    <property type="match status" value="1"/>
</dbReference>
<sequence length="240" mass="26559">MNAEKSPVNHNVDHEEIAKFEAVASRWWDLEGEFKPLHRINPLRLGYIAERAGGLFGKKVLDVGCGGGILAESMAREGATVTGLDMGFEPLQVAKLHALESGIQVDYVQETVEEHAAKHAGQYDVVTCMEMLEHVPDPQSVVRACAQLVKPGGDVFFSTLNRNGKSWLMAVVGAEYILRMVPKGTHDVKKFIKPAELLGWVDQTSLKERHMTGLHYNPITNSFKLGPGVDVNYMLHTQNK</sequence>
<accession>B7MFZ8</accession>
<name>UBIG_ECO45</name>
<reference key="1">
    <citation type="journal article" date="2009" name="PLoS Genet.">
        <title>Organised genome dynamics in the Escherichia coli species results in highly diverse adaptive paths.</title>
        <authorList>
            <person name="Touchon M."/>
            <person name="Hoede C."/>
            <person name="Tenaillon O."/>
            <person name="Barbe V."/>
            <person name="Baeriswyl S."/>
            <person name="Bidet P."/>
            <person name="Bingen E."/>
            <person name="Bonacorsi S."/>
            <person name="Bouchier C."/>
            <person name="Bouvet O."/>
            <person name="Calteau A."/>
            <person name="Chiapello H."/>
            <person name="Clermont O."/>
            <person name="Cruveiller S."/>
            <person name="Danchin A."/>
            <person name="Diard M."/>
            <person name="Dossat C."/>
            <person name="Karoui M.E."/>
            <person name="Frapy E."/>
            <person name="Garry L."/>
            <person name="Ghigo J.M."/>
            <person name="Gilles A.M."/>
            <person name="Johnson J."/>
            <person name="Le Bouguenec C."/>
            <person name="Lescat M."/>
            <person name="Mangenot S."/>
            <person name="Martinez-Jehanne V."/>
            <person name="Matic I."/>
            <person name="Nassif X."/>
            <person name="Oztas S."/>
            <person name="Petit M.A."/>
            <person name="Pichon C."/>
            <person name="Rouy Z."/>
            <person name="Ruf C.S."/>
            <person name="Schneider D."/>
            <person name="Tourret J."/>
            <person name="Vacherie B."/>
            <person name="Vallenet D."/>
            <person name="Medigue C."/>
            <person name="Rocha E.P.C."/>
            <person name="Denamur E."/>
        </authorList>
    </citation>
    <scope>NUCLEOTIDE SEQUENCE [LARGE SCALE GENOMIC DNA]</scope>
    <source>
        <strain>S88 / ExPEC</strain>
    </source>
</reference>
<keyword id="KW-0489">Methyltransferase</keyword>
<keyword id="KW-1185">Reference proteome</keyword>
<keyword id="KW-0949">S-adenosyl-L-methionine</keyword>
<keyword id="KW-0808">Transferase</keyword>
<keyword id="KW-0831">Ubiquinone biosynthesis</keyword>
<evidence type="ECO:0000255" key="1">
    <source>
        <dbReference type="HAMAP-Rule" id="MF_00472"/>
    </source>
</evidence>
<organism>
    <name type="scientific">Escherichia coli O45:K1 (strain S88 / ExPEC)</name>
    <dbReference type="NCBI Taxonomy" id="585035"/>
    <lineage>
        <taxon>Bacteria</taxon>
        <taxon>Pseudomonadati</taxon>
        <taxon>Pseudomonadota</taxon>
        <taxon>Gammaproteobacteria</taxon>
        <taxon>Enterobacterales</taxon>
        <taxon>Enterobacteriaceae</taxon>
        <taxon>Escherichia</taxon>
    </lineage>
</organism>
<protein>
    <recommendedName>
        <fullName evidence="1">Ubiquinone biosynthesis O-methyltransferase</fullName>
    </recommendedName>
    <alternativeName>
        <fullName evidence="1">2-octaprenyl-6-hydroxyphenol methylase</fullName>
        <ecNumber evidence="1">2.1.1.222</ecNumber>
    </alternativeName>
    <alternativeName>
        <fullName evidence="1">3-demethylubiquinone-8 3-O-methyltransferase</fullName>
        <ecNumber evidence="1">2.1.1.64</ecNumber>
    </alternativeName>
</protein>
<proteinExistence type="inferred from homology"/>
<comment type="function">
    <text evidence="1">O-methyltransferase that catalyzes the 2 O-methylation steps in the ubiquinone biosynthetic pathway.</text>
</comment>
<comment type="catalytic activity">
    <reaction evidence="1">
        <text>a 3-demethylubiquinol + S-adenosyl-L-methionine = a ubiquinol + S-adenosyl-L-homocysteine + H(+)</text>
        <dbReference type="Rhea" id="RHEA:44380"/>
        <dbReference type="Rhea" id="RHEA-COMP:9566"/>
        <dbReference type="Rhea" id="RHEA-COMP:10914"/>
        <dbReference type="ChEBI" id="CHEBI:15378"/>
        <dbReference type="ChEBI" id="CHEBI:17976"/>
        <dbReference type="ChEBI" id="CHEBI:57856"/>
        <dbReference type="ChEBI" id="CHEBI:59789"/>
        <dbReference type="ChEBI" id="CHEBI:84422"/>
        <dbReference type="EC" id="2.1.1.64"/>
    </reaction>
</comment>
<comment type="catalytic activity">
    <reaction evidence="1">
        <text>a 3-(all-trans-polyprenyl)benzene-1,2-diol + S-adenosyl-L-methionine = a 2-methoxy-6-(all-trans-polyprenyl)phenol + S-adenosyl-L-homocysteine + H(+)</text>
        <dbReference type="Rhea" id="RHEA:31411"/>
        <dbReference type="Rhea" id="RHEA-COMP:9550"/>
        <dbReference type="Rhea" id="RHEA-COMP:9551"/>
        <dbReference type="ChEBI" id="CHEBI:15378"/>
        <dbReference type="ChEBI" id="CHEBI:57856"/>
        <dbReference type="ChEBI" id="CHEBI:59789"/>
        <dbReference type="ChEBI" id="CHEBI:62729"/>
        <dbReference type="ChEBI" id="CHEBI:62731"/>
        <dbReference type="EC" id="2.1.1.222"/>
    </reaction>
</comment>
<comment type="pathway">
    <text evidence="1">Cofactor biosynthesis; ubiquinone biosynthesis.</text>
</comment>
<comment type="similarity">
    <text evidence="1">Belongs to the methyltransferase superfamily. UbiG/COQ3 family.</text>
</comment>